<comment type="function">
    <text evidence="1">Carrier of the growing fatty acid chain in fatty acid biosynthesis.</text>
</comment>
<comment type="pathway">
    <text evidence="1">Lipid metabolism; fatty acid biosynthesis.</text>
</comment>
<comment type="subcellular location">
    <subcellularLocation>
        <location evidence="1">Cytoplasm</location>
    </subcellularLocation>
</comment>
<comment type="PTM">
    <text evidence="1">4'-phosphopantetheine is transferred from CoA to a specific serine of apo-ACP by AcpS. This modification is essential for activity because fatty acids are bound in thioester linkage to the sulfhydryl of the prosthetic group.</text>
</comment>
<comment type="similarity">
    <text evidence="1">Belongs to the acyl carrier protein (ACP) family.</text>
</comment>
<name>ACP_CHLTR</name>
<organism>
    <name type="scientific">Chlamydia trachomatis serovar D (strain ATCC VR-885 / DSM 19411 / UW-3/Cx)</name>
    <dbReference type="NCBI Taxonomy" id="272561"/>
    <lineage>
        <taxon>Bacteria</taxon>
        <taxon>Pseudomonadati</taxon>
        <taxon>Chlamydiota</taxon>
        <taxon>Chlamydiia</taxon>
        <taxon>Chlamydiales</taxon>
        <taxon>Chlamydiaceae</taxon>
        <taxon>Chlamydia/Chlamydophila group</taxon>
        <taxon>Chlamydia</taxon>
    </lineage>
</organism>
<protein>
    <recommendedName>
        <fullName evidence="1">Acyl carrier protein</fullName>
        <shortName evidence="1">ACP</shortName>
    </recommendedName>
</protein>
<dbReference type="EMBL" id="AE001273">
    <property type="protein sequence ID" value="AAC67828.1"/>
    <property type="molecule type" value="Genomic_DNA"/>
</dbReference>
<dbReference type="PIR" id="H71541">
    <property type="entry name" value="H71541"/>
</dbReference>
<dbReference type="RefSeq" id="NP_219741.1">
    <property type="nucleotide sequence ID" value="NC_000117.1"/>
</dbReference>
<dbReference type="RefSeq" id="WP_009871583.1">
    <property type="nucleotide sequence ID" value="NC_000117.1"/>
</dbReference>
<dbReference type="SMR" id="O84239"/>
<dbReference type="FunCoup" id="O84239">
    <property type="interactions" value="221"/>
</dbReference>
<dbReference type="STRING" id="272561.CT_236"/>
<dbReference type="EnsemblBacteria" id="AAC67828">
    <property type="protein sequence ID" value="AAC67828"/>
    <property type="gene ID" value="CT_236"/>
</dbReference>
<dbReference type="GeneID" id="884884"/>
<dbReference type="KEGG" id="ctr:CT_236"/>
<dbReference type="PATRIC" id="fig|272561.5.peg.253"/>
<dbReference type="HOGENOM" id="CLU_108696_5_1_0"/>
<dbReference type="InParanoid" id="O84239"/>
<dbReference type="OrthoDB" id="9804551at2"/>
<dbReference type="UniPathway" id="UPA00094"/>
<dbReference type="Proteomes" id="UP000000431">
    <property type="component" value="Chromosome"/>
</dbReference>
<dbReference type="GO" id="GO:0005829">
    <property type="term" value="C:cytosol"/>
    <property type="evidence" value="ECO:0000318"/>
    <property type="project" value="GO_Central"/>
</dbReference>
<dbReference type="GO" id="GO:0016020">
    <property type="term" value="C:membrane"/>
    <property type="evidence" value="ECO:0007669"/>
    <property type="project" value="GOC"/>
</dbReference>
<dbReference type="GO" id="GO:0000035">
    <property type="term" value="F:acyl binding"/>
    <property type="evidence" value="ECO:0000318"/>
    <property type="project" value="GO_Central"/>
</dbReference>
<dbReference type="GO" id="GO:0000036">
    <property type="term" value="F:acyl carrier activity"/>
    <property type="evidence" value="ECO:0000318"/>
    <property type="project" value="GO_Central"/>
</dbReference>
<dbReference type="GO" id="GO:0009245">
    <property type="term" value="P:lipid A biosynthetic process"/>
    <property type="evidence" value="ECO:0000318"/>
    <property type="project" value="GO_Central"/>
</dbReference>
<dbReference type="FunFam" id="1.10.1200.10:FF:000041">
    <property type="entry name" value="Acyl carrier protein"/>
    <property type="match status" value="1"/>
</dbReference>
<dbReference type="Gene3D" id="1.10.1200.10">
    <property type="entry name" value="ACP-like"/>
    <property type="match status" value="1"/>
</dbReference>
<dbReference type="HAMAP" id="MF_01217">
    <property type="entry name" value="Acyl_carrier"/>
    <property type="match status" value="1"/>
</dbReference>
<dbReference type="InterPro" id="IPR003231">
    <property type="entry name" value="ACP"/>
</dbReference>
<dbReference type="InterPro" id="IPR036736">
    <property type="entry name" value="ACP-like_sf"/>
</dbReference>
<dbReference type="InterPro" id="IPR009081">
    <property type="entry name" value="PP-bd_ACP"/>
</dbReference>
<dbReference type="InterPro" id="IPR006162">
    <property type="entry name" value="Ppantetheine_attach_site"/>
</dbReference>
<dbReference type="NCBIfam" id="TIGR00517">
    <property type="entry name" value="acyl_carrier"/>
    <property type="match status" value="1"/>
</dbReference>
<dbReference type="NCBIfam" id="NF002148">
    <property type="entry name" value="PRK00982.1-2"/>
    <property type="match status" value="1"/>
</dbReference>
<dbReference type="NCBIfam" id="NF002150">
    <property type="entry name" value="PRK00982.1-4"/>
    <property type="match status" value="1"/>
</dbReference>
<dbReference type="PANTHER" id="PTHR20863">
    <property type="entry name" value="ACYL CARRIER PROTEIN"/>
    <property type="match status" value="1"/>
</dbReference>
<dbReference type="PANTHER" id="PTHR20863:SF76">
    <property type="entry name" value="CARRIER DOMAIN-CONTAINING PROTEIN"/>
    <property type="match status" value="1"/>
</dbReference>
<dbReference type="Pfam" id="PF00550">
    <property type="entry name" value="PP-binding"/>
    <property type="match status" value="1"/>
</dbReference>
<dbReference type="SUPFAM" id="SSF47336">
    <property type="entry name" value="ACP-like"/>
    <property type="match status" value="1"/>
</dbReference>
<dbReference type="PROSITE" id="PS50075">
    <property type="entry name" value="CARRIER"/>
    <property type="match status" value="1"/>
</dbReference>
<dbReference type="PROSITE" id="PS00012">
    <property type="entry name" value="PHOSPHOPANTETHEINE"/>
    <property type="match status" value="1"/>
</dbReference>
<sequence>MSLEDDVKAIIVDQLGVSPEDVKVDSSFIEDLNADSLDLTELIMTLEEKFAFEISEDDAEQLRTVGDVIKYIQERQN</sequence>
<proteinExistence type="inferred from homology"/>
<gene>
    <name evidence="1" type="primary">acpP</name>
    <name type="ordered locus">CT_236</name>
</gene>
<evidence type="ECO:0000255" key="1">
    <source>
        <dbReference type="HAMAP-Rule" id="MF_01217"/>
    </source>
</evidence>
<evidence type="ECO:0000255" key="2">
    <source>
        <dbReference type="PROSITE-ProRule" id="PRU00258"/>
    </source>
</evidence>
<keyword id="KW-0963">Cytoplasm</keyword>
<keyword id="KW-0275">Fatty acid biosynthesis</keyword>
<keyword id="KW-0276">Fatty acid metabolism</keyword>
<keyword id="KW-0444">Lipid biosynthesis</keyword>
<keyword id="KW-0443">Lipid metabolism</keyword>
<keyword id="KW-0596">Phosphopantetheine</keyword>
<keyword id="KW-0597">Phosphoprotein</keyword>
<keyword id="KW-1185">Reference proteome</keyword>
<reference key="1">
    <citation type="journal article" date="1998" name="Science">
        <title>Genome sequence of an obligate intracellular pathogen of humans: Chlamydia trachomatis.</title>
        <authorList>
            <person name="Stephens R.S."/>
            <person name="Kalman S."/>
            <person name="Lammel C.J."/>
            <person name="Fan J."/>
            <person name="Marathe R."/>
            <person name="Aravind L."/>
            <person name="Mitchell W.P."/>
            <person name="Olinger L."/>
            <person name="Tatusov R.L."/>
            <person name="Zhao Q."/>
            <person name="Koonin E.V."/>
            <person name="Davis R.W."/>
        </authorList>
    </citation>
    <scope>NUCLEOTIDE SEQUENCE [LARGE SCALE GENOMIC DNA]</scope>
    <source>
        <strain>ATCC VR-885 / DSM 19411 / UW-3/Cx</strain>
    </source>
</reference>
<feature type="chain" id="PRO_0000180129" description="Acyl carrier protein">
    <location>
        <begin position="1"/>
        <end position="77"/>
    </location>
</feature>
<feature type="domain" description="Carrier" evidence="2">
    <location>
        <begin position="1"/>
        <end position="76"/>
    </location>
</feature>
<feature type="modified residue" description="O-(pantetheine 4'-phosphoryl)serine" evidence="2">
    <location>
        <position position="36"/>
    </location>
</feature>
<accession>O84239</accession>